<organism>
    <name type="scientific">Mus musculus</name>
    <name type="common">Mouse</name>
    <dbReference type="NCBI Taxonomy" id="10090"/>
    <lineage>
        <taxon>Eukaryota</taxon>
        <taxon>Metazoa</taxon>
        <taxon>Chordata</taxon>
        <taxon>Craniata</taxon>
        <taxon>Vertebrata</taxon>
        <taxon>Euteleostomi</taxon>
        <taxon>Mammalia</taxon>
        <taxon>Eutheria</taxon>
        <taxon>Euarchontoglires</taxon>
        <taxon>Glires</taxon>
        <taxon>Rodentia</taxon>
        <taxon>Myomorpha</taxon>
        <taxon>Muroidea</taxon>
        <taxon>Muridae</taxon>
        <taxon>Murinae</taxon>
        <taxon>Mus</taxon>
        <taxon>Mus</taxon>
    </lineage>
</organism>
<gene>
    <name evidence="7" type="primary">Tcaf3</name>
    <name type="synonym">Eapa2</name>
    <name type="synonym">Fam115e</name>
</gene>
<sequence>MATTPDAAFETLMNGVTSWDLPKEPIPSELLLTGESAFPVMVNDKGQVLIAASSYGQGRLVVVSHESYLLHDGLVPFLLNVVKWLCPCPGAPIAVHSSLASLVNILGDSGINALVQPEPGEALGVYCIDAYNDALTEKLIQFLKNGGGLLIGGQALNWAAHHGHDKVLSIFPGNQVTSVAGVYFTDISANRDWFKVSKEIPNLRLYVQCEDELEDDQQQLLKGMSEIYIEAGVIPSQLLVHGQRAFPLGVDNSLNCFLAAARYGRGRVVLGGNESLILNQTMLPFVLNALHWLMGNQTGRIGLASDMKVLKSMLPNSSFQWSESELLTSDLSVFCCCSLANIDSEEVEEFVAEGGGLLIGAEAWSWGRRNPYSSCMTQYPDNIVLKRFGLGITSHVAQRGSFPFPNPEGTNYHFRRALSQFESVIYSRGSSLHESWLNKLSQDCFYMFQMTHQRISIYDSVKKHALKMIQSKDFPSVTEQYPIARGSSQAFLLSLAYELFKSGVDRSQLLPPPALLPPTESPITIKISTDNDNSWVSTGLYLPEGQVAQVLLPSEATHAKLKVLIGCHRDNISQARTYFRPPVMTYVYHLTSSQTSISWLYGGLLYIMVPNKYNQDNVSVTIRGAVSAPYFRLGKTTQEEWKNLITHSKAPWGELATDNIILTIPTVNLKELQDPYPLLQLWDKMVRAVAKLAARPFPFQRAERVVLDKQISFGFLHSGYPIMGLISIVEGIISEFKIRSHGIWGVIHELGHNHQKSGWTFPPHTTEALCNLWTIYVHETVLNIPREQAHPSLNPELRRQRIKYHLNKGAPLSNWIMWTALETYLQLQEGFGWEPFIQVFADYRTLSGLPQNNEDKMNLWVKKFSEAVHKNLAPFFEAWGWPVKYAVAKSLASLPEWQENPMKRYTAEGTEGRE</sequence>
<feature type="chain" id="PRO_0000320191" description="TRPM8 channel-associated factor 3">
    <location>
        <begin position="1"/>
        <end position="914"/>
    </location>
</feature>
<feature type="domain" description="Peptidase M60" evidence="3">
    <location>
        <begin position="533"/>
        <end position="832"/>
    </location>
</feature>
<proteinExistence type="evidence at protein level"/>
<reference key="1">
    <citation type="journal article" date="2006" name="Blood">
        <title>Physiologic self antigens rapidly capacitate autoimmune disease-specific polyclonal CD4+ CD25+ regulatory T cells.</title>
        <authorList>
            <person name="Setiady Y.Y."/>
            <person name="Ohno K."/>
            <person name="Samy E.T."/>
            <person name="Bagavant H."/>
            <person name="Qiao H."/>
            <person name="Sharp C."/>
            <person name="She J.X."/>
            <person name="Tung K.S.K."/>
        </authorList>
    </citation>
    <scope>NUCLEOTIDE SEQUENCE [MRNA]</scope>
    <scope>ANTIGEN</scope>
    <scope>TISSUE SPECIFICITY</scope>
    <source>
        <strain>C57BL/6J</strain>
    </source>
</reference>
<reference key="2">
    <citation type="journal article" date="2006" name="J. Endocrinol.">
        <title>Identification of prostatic-secreted proteins in mice by mass spectrometric analysis and evaluation of lobe-specific and androgen-dependent mRNA expression.</title>
        <authorList>
            <person name="Fujimoto N."/>
            <person name="Akimoto Y."/>
            <person name="Suzuki T."/>
            <person name="Kitamura S."/>
            <person name="Ohta S."/>
        </authorList>
    </citation>
    <scope>IDENTIFICATION BY MASS SPECTROMETRY</scope>
    <scope>TISSUE SPECIFICITY</scope>
</reference>
<protein>
    <recommendedName>
        <fullName evidence="7">TRPM8 channel-associated factor 3</fullName>
    </recommendedName>
    <alternativeName>
        <fullName>Experimental autoimmune prostatitis antigen 2</fullName>
    </alternativeName>
</protein>
<keyword id="KW-1185">Reference proteome</keyword>
<name>TCAF3_MOUSE</name>
<evidence type="ECO:0000250" key="1">
    <source>
        <dbReference type="UniProtKB" id="A6NFQ2"/>
    </source>
</evidence>
<evidence type="ECO:0000250" key="2">
    <source>
        <dbReference type="UniProtKB" id="Q9Y4C2"/>
    </source>
</evidence>
<evidence type="ECO:0000255" key="3">
    <source>
        <dbReference type="PROSITE-ProRule" id="PRU01060"/>
    </source>
</evidence>
<evidence type="ECO:0000269" key="4">
    <source>
    </source>
</evidence>
<evidence type="ECO:0000269" key="5">
    <source>
    </source>
</evidence>
<evidence type="ECO:0000305" key="6"/>
<evidence type="ECO:0000312" key="7">
    <source>
        <dbReference type="MGI" id="MGI:3042585"/>
    </source>
</evidence>
<comment type="function">
    <text evidence="1 2">May play a role in the regulation of the cation channel TRPM8 activity.</text>
</comment>
<comment type="tissue specificity">
    <text evidence="4 5">Prostate-specific. Present in both dorso-lateral and anterior prostate.</text>
</comment>
<comment type="miscellaneous">
    <text>May act as an autoantigen in prostate autoimmunity.</text>
</comment>
<comment type="similarity">
    <text evidence="6">Belongs to the TCAF family.</text>
</comment>
<accession>Q6QR59</accession>
<dbReference type="EMBL" id="AY528666">
    <property type="protein sequence ID" value="AAS18676.1"/>
    <property type="molecule type" value="mRNA"/>
</dbReference>
<dbReference type="CCDS" id="CCDS20074.1"/>
<dbReference type="RefSeq" id="NP_981933.1">
    <property type="nucleotide sequence ID" value="NM_203396.1"/>
</dbReference>
<dbReference type="SMR" id="Q6QR59"/>
<dbReference type="FunCoup" id="Q6QR59">
    <property type="interactions" value="6"/>
</dbReference>
<dbReference type="STRING" id="10090.ENSMUSP00000064060"/>
<dbReference type="MEROPS" id="M98.A03"/>
<dbReference type="PaxDb" id="10090-ENSMUSP00000064060"/>
<dbReference type="ProteomicsDB" id="263085"/>
<dbReference type="DNASU" id="403088"/>
<dbReference type="Ensembl" id="ENSMUST00000069023.4">
    <property type="protein sequence ID" value="ENSMUSP00000064060.4"/>
    <property type="gene ID" value="ENSMUSG00000018656.6"/>
</dbReference>
<dbReference type="GeneID" id="403088"/>
<dbReference type="KEGG" id="mmu:403088"/>
<dbReference type="UCSC" id="uc009brm.1">
    <property type="organism name" value="mouse"/>
</dbReference>
<dbReference type="AGR" id="MGI:3042585"/>
<dbReference type="CTD" id="403088"/>
<dbReference type="MGI" id="MGI:3042585">
    <property type="gene designation" value="Tcaf3"/>
</dbReference>
<dbReference type="VEuPathDB" id="HostDB:ENSMUSG00000018656"/>
<dbReference type="eggNOG" id="ENOG502QQUS">
    <property type="taxonomic scope" value="Eukaryota"/>
</dbReference>
<dbReference type="GeneTree" id="ENSGT00390000017365"/>
<dbReference type="HOGENOM" id="CLU_011215_0_0_1"/>
<dbReference type="InParanoid" id="Q6QR59"/>
<dbReference type="OMA" id="FNCFLAA"/>
<dbReference type="OrthoDB" id="10260387at2759"/>
<dbReference type="PhylomeDB" id="Q6QR59"/>
<dbReference type="TreeFam" id="TF331520"/>
<dbReference type="BioGRID-ORCS" id="403088">
    <property type="hits" value="1 hit in 78 CRISPR screens"/>
</dbReference>
<dbReference type="ChiTaRS" id="Tcaf3">
    <property type="organism name" value="mouse"/>
</dbReference>
<dbReference type="PRO" id="PR:Q6QR59"/>
<dbReference type="Proteomes" id="UP000000589">
    <property type="component" value="Chromosome 6"/>
</dbReference>
<dbReference type="RNAct" id="Q6QR59">
    <property type="molecule type" value="protein"/>
</dbReference>
<dbReference type="Bgee" id="ENSMUSG00000018656">
    <property type="expression patterns" value="Expressed in cerebellar cortex and 3 other cell types or tissues"/>
</dbReference>
<dbReference type="ExpressionAtlas" id="Q6QR59">
    <property type="expression patterns" value="baseline and differential"/>
</dbReference>
<dbReference type="FunFam" id="1.10.390.30:FF:000001">
    <property type="entry name" value="TRPM8 channel-associated factor 1"/>
    <property type="match status" value="1"/>
</dbReference>
<dbReference type="FunFam" id="3.40.390.80:FF:000001">
    <property type="entry name" value="TRPM8 channel-associated factor 1"/>
    <property type="match status" value="1"/>
</dbReference>
<dbReference type="FunFam" id="2.60.120.1250:FF:000001">
    <property type="entry name" value="TRPM8 channel-associated factor 3"/>
    <property type="match status" value="1"/>
</dbReference>
<dbReference type="Gene3D" id="2.60.120.1250">
    <property type="entry name" value="Peptidase M60, enhancin-like domain 1"/>
    <property type="match status" value="1"/>
</dbReference>
<dbReference type="Gene3D" id="3.40.390.80">
    <property type="entry name" value="Peptidase M60, enhancin-like domain 2"/>
    <property type="match status" value="1"/>
</dbReference>
<dbReference type="Gene3D" id="1.10.390.30">
    <property type="entry name" value="Peptidase M60, enhancin-like domain 3"/>
    <property type="match status" value="1"/>
</dbReference>
<dbReference type="InterPro" id="IPR029062">
    <property type="entry name" value="Class_I_gatase-like"/>
</dbReference>
<dbReference type="InterPro" id="IPR035423">
    <property type="entry name" value="M60-like_N"/>
</dbReference>
<dbReference type="InterPro" id="IPR042279">
    <property type="entry name" value="Pep_M60_3"/>
</dbReference>
<dbReference type="InterPro" id="IPR031161">
    <property type="entry name" value="Peptidase_M60_dom"/>
</dbReference>
<dbReference type="InterPro" id="IPR051244">
    <property type="entry name" value="TCAF"/>
</dbReference>
<dbReference type="PANTHER" id="PTHR15730">
    <property type="entry name" value="EXPERIMENTAL AUTOIMMUNE PROSTATITIS ANTIGEN 2-RELATED"/>
    <property type="match status" value="1"/>
</dbReference>
<dbReference type="PANTHER" id="PTHR15730:SF3">
    <property type="entry name" value="TRPM8 CHANNEL-ASSOCIATED FACTOR 3"/>
    <property type="match status" value="1"/>
</dbReference>
<dbReference type="Pfam" id="PF17291">
    <property type="entry name" value="M60-like_N"/>
    <property type="match status" value="1"/>
</dbReference>
<dbReference type="Pfam" id="PF13402">
    <property type="entry name" value="Peptidase_M60"/>
    <property type="match status" value="1"/>
</dbReference>
<dbReference type="SMART" id="SM01276">
    <property type="entry name" value="M60-like"/>
    <property type="match status" value="1"/>
</dbReference>
<dbReference type="SUPFAM" id="SSF52317">
    <property type="entry name" value="Class I glutamine amidotransferase-like"/>
    <property type="match status" value="1"/>
</dbReference>
<dbReference type="PROSITE" id="PS51723">
    <property type="entry name" value="PEPTIDASE_M60"/>
    <property type="match status" value="1"/>
</dbReference>